<name>MDTC_SALTI</name>
<protein>
    <recommendedName>
        <fullName evidence="2">Multidrug resistance protein MdtC</fullName>
    </recommendedName>
    <alternativeName>
        <fullName evidence="2">Multidrug transporter MdtC</fullName>
    </alternativeName>
</protein>
<feature type="chain" id="PRO_0000161836" description="Multidrug resistance protein MdtC">
    <location>
        <begin position="1"/>
        <end position="1026"/>
    </location>
</feature>
<feature type="topological domain" description="Cytoplasmic" evidence="1">
    <location>
        <begin position="1"/>
        <end position="6"/>
    </location>
</feature>
<feature type="transmembrane region" description="Helical" evidence="2">
    <location>
        <begin position="7"/>
        <end position="29"/>
    </location>
</feature>
<feature type="topological domain" description="Periplasmic" evidence="1">
    <location>
        <begin position="30"/>
        <end position="335"/>
    </location>
</feature>
<feature type="transmembrane region" description="Helical" evidence="2">
    <location>
        <begin position="336"/>
        <end position="353"/>
    </location>
</feature>
<feature type="topological domain" description="Cytoplasmic" evidence="1">
    <location>
        <begin position="354"/>
        <end position="359"/>
    </location>
</feature>
<feature type="transmembrane region" description="Helical" evidence="2">
    <location>
        <begin position="360"/>
        <end position="379"/>
    </location>
</feature>
<feature type="topological domain" description="Periplasmic" evidence="1">
    <location>
        <begin position="380"/>
        <end position="388"/>
    </location>
</feature>
<feature type="transmembrane region" description="Helical" evidence="2">
    <location>
        <begin position="389"/>
        <end position="411"/>
    </location>
</feature>
<feature type="topological domain" description="Cytoplasmic" evidence="1">
    <location>
        <begin position="412"/>
        <end position="430"/>
    </location>
</feature>
<feature type="transmembrane region" description="Helical" evidence="2">
    <location>
        <begin position="431"/>
        <end position="453"/>
    </location>
</feature>
<feature type="topological domain" description="Periplasmic" evidence="1">
    <location>
        <begin position="454"/>
        <end position="467"/>
    </location>
</feature>
<feature type="transmembrane region" description="Helical" evidence="2">
    <location>
        <begin position="468"/>
        <end position="490"/>
    </location>
</feature>
<feature type="topological domain" description="Cytoplasmic" evidence="1">
    <location>
        <begin position="491"/>
        <end position="852"/>
    </location>
</feature>
<feature type="transmembrane region" description="Helical" evidence="2">
    <location>
        <begin position="853"/>
        <end position="875"/>
    </location>
</feature>
<feature type="topological domain" description="Periplasmic" evidence="1">
    <location>
        <begin position="876"/>
        <end position="894"/>
    </location>
</feature>
<feature type="transmembrane region" description="Helical" evidence="2">
    <location>
        <begin position="895"/>
        <end position="917"/>
    </location>
</feature>
<feature type="topological domain" description="Cytoplasmic" evidence="1">
    <location>
        <begin position="918"/>
        <end position="947"/>
    </location>
</feature>
<feature type="transmembrane region" description="Helical" evidence="2">
    <location>
        <begin position="948"/>
        <end position="970"/>
    </location>
</feature>
<feature type="topological domain" description="Periplasmic" evidence="1">
    <location>
        <begin position="971"/>
        <end position="984"/>
    </location>
</feature>
<feature type="transmembrane region" description="Helical" evidence="2">
    <location>
        <begin position="985"/>
        <end position="1007"/>
    </location>
</feature>
<feature type="topological domain" description="Cytoplasmic" evidence="1">
    <location>
        <begin position="1008"/>
        <end position="1026"/>
    </location>
</feature>
<keyword id="KW-0997">Cell inner membrane</keyword>
<keyword id="KW-1003">Cell membrane</keyword>
<keyword id="KW-0472">Membrane</keyword>
<keyword id="KW-0812">Transmembrane</keyword>
<keyword id="KW-1133">Transmembrane helix</keyword>
<keyword id="KW-0813">Transport</keyword>
<evidence type="ECO:0000255" key="1"/>
<evidence type="ECO:0000255" key="2">
    <source>
        <dbReference type="HAMAP-Rule" id="MF_01424"/>
    </source>
</evidence>
<gene>
    <name evidence="2" type="primary">mdtC</name>
    <name type="ordered locus">STY2341</name>
    <name type="ordered locus">t0744</name>
</gene>
<dbReference type="EMBL" id="AL513382">
    <property type="protein sequence ID" value="CAD02491.1"/>
    <property type="molecule type" value="Genomic_DNA"/>
</dbReference>
<dbReference type="EMBL" id="AE014613">
    <property type="protein sequence ID" value="AAO68437.1"/>
    <property type="molecule type" value="Genomic_DNA"/>
</dbReference>
<dbReference type="RefSeq" id="NP_456674.1">
    <property type="nucleotide sequence ID" value="NC_003198.1"/>
</dbReference>
<dbReference type="RefSeq" id="WP_001210089.1">
    <property type="nucleotide sequence ID" value="NZ_WSUR01000002.1"/>
</dbReference>
<dbReference type="SMR" id="Q8Z5F6"/>
<dbReference type="STRING" id="220341.gene:17586246"/>
<dbReference type="KEGG" id="stt:t0744"/>
<dbReference type="KEGG" id="sty:STY2341"/>
<dbReference type="PATRIC" id="fig|220341.7.peg.2365"/>
<dbReference type="eggNOG" id="COG0841">
    <property type="taxonomic scope" value="Bacteria"/>
</dbReference>
<dbReference type="HOGENOM" id="CLU_002755_1_2_6"/>
<dbReference type="OMA" id="LEPFIIM"/>
<dbReference type="Proteomes" id="UP000000541">
    <property type="component" value="Chromosome"/>
</dbReference>
<dbReference type="Proteomes" id="UP000002670">
    <property type="component" value="Chromosome"/>
</dbReference>
<dbReference type="GO" id="GO:0005886">
    <property type="term" value="C:plasma membrane"/>
    <property type="evidence" value="ECO:0007669"/>
    <property type="project" value="UniProtKB-SubCell"/>
</dbReference>
<dbReference type="GO" id="GO:0042910">
    <property type="term" value="F:xenobiotic transmembrane transporter activity"/>
    <property type="evidence" value="ECO:0007669"/>
    <property type="project" value="TreeGrafter"/>
</dbReference>
<dbReference type="FunFam" id="1.20.1640.10:FF:000001">
    <property type="entry name" value="Efflux pump membrane transporter"/>
    <property type="match status" value="1"/>
</dbReference>
<dbReference type="FunFam" id="3.30.70.1430:FF:000001">
    <property type="entry name" value="Efflux pump membrane transporter"/>
    <property type="match status" value="1"/>
</dbReference>
<dbReference type="FunFam" id="3.30.2090.10:FF:000004">
    <property type="entry name" value="Multidrug resistance protein MdtC"/>
    <property type="match status" value="1"/>
</dbReference>
<dbReference type="FunFam" id="3.30.2090.10:FF:000005">
    <property type="entry name" value="Multidrug resistance protein MdtC"/>
    <property type="match status" value="1"/>
</dbReference>
<dbReference type="FunFam" id="3.30.70.1430:FF:000004">
    <property type="entry name" value="Multidrug resistance protein MdtC"/>
    <property type="match status" value="1"/>
</dbReference>
<dbReference type="Gene3D" id="3.30.70.1430">
    <property type="entry name" value="Multidrug efflux transporter AcrB pore domain"/>
    <property type="match status" value="2"/>
</dbReference>
<dbReference type="Gene3D" id="3.30.70.1440">
    <property type="entry name" value="Multidrug efflux transporter AcrB pore domain"/>
    <property type="match status" value="1"/>
</dbReference>
<dbReference type="Gene3D" id="3.30.70.1320">
    <property type="entry name" value="Multidrug efflux transporter AcrB pore domain like"/>
    <property type="match status" value="1"/>
</dbReference>
<dbReference type="Gene3D" id="3.30.2090.10">
    <property type="entry name" value="Multidrug efflux transporter AcrB TolC docking domain, DN and DC subdomains"/>
    <property type="match status" value="2"/>
</dbReference>
<dbReference type="Gene3D" id="1.20.1640.10">
    <property type="entry name" value="Multidrug efflux transporter AcrB transmembrane domain"/>
    <property type="match status" value="2"/>
</dbReference>
<dbReference type="HAMAP" id="MF_01424">
    <property type="entry name" value="MdtC"/>
    <property type="match status" value="1"/>
</dbReference>
<dbReference type="InterPro" id="IPR027463">
    <property type="entry name" value="AcrB_DN_DC_subdom"/>
</dbReference>
<dbReference type="InterPro" id="IPR001036">
    <property type="entry name" value="Acrflvin-R"/>
</dbReference>
<dbReference type="InterPro" id="IPR023931">
    <property type="entry name" value="Multidrug-R_MdtC"/>
</dbReference>
<dbReference type="NCBIfam" id="NF007905">
    <property type="entry name" value="PRK10614.1"/>
    <property type="match status" value="1"/>
</dbReference>
<dbReference type="NCBIfam" id="NF033617">
    <property type="entry name" value="RND_permease_2"/>
    <property type="match status" value="1"/>
</dbReference>
<dbReference type="PANTHER" id="PTHR32063">
    <property type="match status" value="1"/>
</dbReference>
<dbReference type="PANTHER" id="PTHR32063:SF34">
    <property type="entry name" value="MULTIDRUG RESISTANCE PROTEIN MDTC"/>
    <property type="match status" value="1"/>
</dbReference>
<dbReference type="Pfam" id="PF00873">
    <property type="entry name" value="ACR_tran"/>
    <property type="match status" value="1"/>
</dbReference>
<dbReference type="PRINTS" id="PR00702">
    <property type="entry name" value="ACRIFLAVINRP"/>
</dbReference>
<dbReference type="SUPFAM" id="SSF82693">
    <property type="entry name" value="Multidrug efflux transporter AcrB pore domain, PN1, PN2, PC1 and PC2 subdomains"/>
    <property type="match status" value="4"/>
</dbReference>
<dbReference type="SUPFAM" id="SSF82714">
    <property type="entry name" value="Multidrug efflux transporter AcrB TolC docking domain, DN and DC subdomains"/>
    <property type="match status" value="2"/>
</dbReference>
<dbReference type="SUPFAM" id="SSF82866">
    <property type="entry name" value="Multidrug efflux transporter AcrB transmembrane domain"/>
    <property type="match status" value="2"/>
</dbReference>
<sequence length="1026" mass="111049">MRFFALFIYRPVATILIAAAITLCGILGFRLLPVAPLPQVDFPVIMVSASLPGASPETMASSVATPLERSLGRIAGVNEMTSSSSLGSTRIILEFNFDRDINGAARDVQAAINAAQSLLPGGMPSRPTYRKANPSDAPIMILTLTSESWSQGKLYDFASTQLAQTIAQIDGVGDVDVGGSSLPAVRVGLNPQALFNQGVSLDEVREAIDSANVRRPQGAIEDSVHRWQIQTNDELKTAAEYQPLIIHYNNGAAVRLGDVASVTDSVQDVRNAGMTNAKPAILLMIRKLPEANIIQTVDGIRAKLPELRAMIPAAIDLQIAQDRSPTIRASLQEVEETLAISVALVILVVFLFLRSGRATLIPAVAVPVSLIGTFAAMYLCGFSLNNLSLMALTIATGFVVDDAIVVLENIARHLEARMKPLQAALQGTREVGFTVISMSLSLVAVFLPLLLMGGLPGRLLREFAVTLSVAIGISLVVSLTLTPMMCGWMLKSSKPRTQPRKRGVGRLLVALQQGYGTSLKWVLNHTRLVGVVFLGTVALNIWLYIAIPKTFFPEQDTGVLMGGIQADQSISFQAMRGKLQDFMKIIRDDPAVNNVTGFTGGSRVNSGMMFITLKPRGERKETAQQVIDRLRVKLAKEPGAKLFLMAVQDIRVGGRQANASYQYTLLSDSLPALREWEPKIRKALSALPQLADVNSDQQDNGAEMNLIYDRDTMSRLGIDVQAANSLLNNAFGQRQISTIYQPMNQYKVVMEVDPRYSQDISALEKMFVINRDGKAIPLSYFAQWRPANAPLSVNHQGLSAASTIAFNLPTGTSLSQATEAIDRTMTQLGVPSTVRGSFSGTAQVFQQTMNSQLILIVAAIATVYIVLGILYESYVHPLTILSTLPSAGVGALLALELFNAPFSLIALIGIMLLIGIVKKNAIMMVDFALEAQRSGGLTPEQAIFQACLLRFRPIMMTTLAALFGALPLVLSGGDGSELRQPLGITIVGGLVMSQLLTLYTTPVVYLFFDRLRLRFSRKNSKPVVEI</sequence>
<reference key="1">
    <citation type="journal article" date="2001" name="Nature">
        <title>Complete genome sequence of a multiple drug resistant Salmonella enterica serovar Typhi CT18.</title>
        <authorList>
            <person name="Parkhill J."/>
            <person name="Dougan G."/>
            <person name="James K.D."/>
            <person name="Thomson N.R."/>
            <person name="Pickard D."/>
            <person name="Wain J."/>
            <person name="Churcher C.M."/>
            <person name="Mungall K.L."/>
            <person name="Bentley S.D."/>
            <person name="Holden M.T.G."/>
            <person name="Sebaihia M."/>
            <person name="Baker S."/>
            <person name="Basham D."/>
            <person name="Brooks K."/>
            <person name="Chillingworth T."/>
            <person name="Connerton P."/>
            <person name="Cronin A."/>
            <person name="Davis P."/>
            <person name="Davies R.M."/>
            <person name="Dowd L."/>
            <person name="White N."/>
            <person name="Farrar J."/>
            <person name="Feltwell T."/>
            <person name="Hamlin N."/>
            <person name="Haque A."/>
            <person name="Hien T.T."/>
            <person name="Holroyd S."/>
            <person name="Jagels K."/>
            <person name="Krogh A."/>
            <person name="Larsen T.S."/>
            <person name="Leather S."/>
            <person name="Moule S."/>
            <person name="O'Gaora P."/>
            <person name="Parry C."/>
            <person name="Quail M.A."/>
            <person name="Rutherford K.M."/>
            <person name="Simmonds M."/>
            <person name="Skelton J."/>
            <person name="Stevens K."/>
            <person name="Whitehead S."/>
            <person name="Barrell B.G."/>
        </authorList>
    </citation>
    <scope>NUCLEOTIDE SEQUENCE [LARGE SCALE GENOMIC DNA]</scope>
    <source>
        <strain>CT18</strain>
    </source>
</reference>
<reference key="2">
    <citation type="journal article" date="2003" name="J. Bacteriol.">
        <title>Comparative genomics of Salmonella enterica serovar Typhi strains Ty2 and CT18.</title>
        <authorList>
            <person name="Deng W."/>
            <person name="Liou S.-R."/>
            <person name="Plunkett G. III"/>
            <person name="Mayhew G.F."/>
            <person name="Rose D.J."/>
            <person name="Burland V."/>
            <person name="Kodoyianni V."/>
            <person name="Schwartz D.C."/>
            <person name="Blattner F.R."/>
        </authorList>
    </citation>
    <scope>NUCLEOTIDE SEQUENCE [LARGE SCALE GENOMIC DNA]</scope>
    <source>
        <strain>ATCC 700931 / Ty2</strain>
    </source>
</reference>
<proteinExistence type="inferred from homology"/>
<accession>Q8Z5F6</accession>
<accession>Q7CAY7</accession>
<comment type="subunit">
    <text evidence="2">Part of a tripartite efflux system composed of MdtA, MdtB and MdtC. MdtC forms a heteromultimer with MdtB.</text>
</comment>
<comment type="subcellular location">
    <subcellularLocation>
        <location evidence="2">Cell inner membrane</location>
        <topology evidence="2">Multi-pass membrane protein</topology>
    </subcellularLocation>
</comment>
<comment type="similarity">
    <text evidence="2">Belongs to the resistance-nodulation-cell division (RND) (TC 2.A.6) family. MdtC subfamily.</text>
</comment>
<organism>
    <name type="scientific">Salmonella typhi</name>
    <dbReference type="NCBI Taxonomy" id="90370"/>
    <lineage>
        <taxon>Bacteria</taxon>
        <taxon>Pseudomonadati</taxon>
        <taxon>Pseudomonadota</taxon>
        <taxon>Gammaproteobacteria</taxon>
        <taxon>Enterobacterales</taxon>
        <taxon>Enterobacteriaceae</taxon>
        <taxon>Salmonella</taxon>
    </lineage>
</organism>